<keyword id="KW-0627">Porphyrin biosynthesis</keyword>
<keyword id="KW-0808">Transferase</keyword>
<accession>C3K424</accession>
<feature type="chain" id="PRO_1000204659" description="Porphobilinogen deaminase">
    <location>
        <begin position="1"/>
        <end position="313"/>
    </location>
</feature>
<feature type="modified residue" description="S-(dipyrrolylmethanemethyl)cysteine" evidence="1">
    <location>
        <position position="242"/>
    </location>
</feature>
<evidence type="ECO:0000255" key="1">
    <source>
        <dbReference type="HAMAP-Rule" id="MF_00260"/>
    </source>
</evidence>
<gene>
    <name evidence="1" type="primary">hemC</name>
    <name type="ordered locus">PFLU_5934</name>
</gene>
<protein>
    <recommendedName>
        <fullName evidence="1">Porphobilinogen deaminase</fullName>
        <shortName evidence="1">PBG</shortName>
        <ecNumber evidence="1">2.5.1.61</ecNumber>
    </recommendedName>
    <alternativeName>
        <fullName evidence="1">Hydroxymethylbilane synthase</fullName>
        <shortName evidence="1">HMBS</shortName>
    </alternativeName>
    <alternativeName>
        <fullName evidence="1">Pre-uroporphyrinogen synthase</fullName>
    </alternativeName>
</protein>
<reference key="1">
    <citation type="journal article" date="2009" name="Genome Biol.">
        <title>Genomic and genetic analyses of diversity and plant interactions of Pseudomonas fluorescens.</title>
        <authorList>
            <person name="Silby M.W."/>
            <person name="Cerdeno-Tarraga A.M."/>
            <person name="Vernikos G.S."/>
            <person name="Giddens S.R."/>
            <person name="Jackson R.W."/>
            <person name="Preston G.M."/>
            <person name="Zhang X.-X."/>
            <person name="Moon C.D."/>
            <person name="Gehrig S.M."/>
            <person name="Godfrey S.A.C."/>
            <person name="Knight C.G."/>
            <person name="Malone J.G."/>
            <person name="Robinson Z."/>
            <person name="Spiers A.J."/>
            <person name="Harris S."/>
            <person name="Challis G.L."/>
            <person name="Yaxley A.M."/>
            <person name="Harris D."/>
            <person name="Seeger K."/>
            <person name="Murphy L."/>
            <person name="Rutter S."/>
            <person name="Squares R."/>
            <person name="Quail M.A."/>
            <person name="Saunders E."/>
            <person name="Mavromatis K."/>
            <person name="Brettin T.S."/>
            <person name="Bentley S.D."/>
            <person name="Hothersall J."/>
            <person name="Stephens E."/>
            <person name="Thomas C.M."/>
            <person name="Parkhill J."/>
            <person name="Levy S.B."/>
            <person name="Rainey P.B."/>
            <person name="Thomson N.R."/>
        </authorList>
    </citation>
    <scope>NUCLEOTIDE SEQUENCE [LARGE SCALE GENOMIC DNA]</scope>
    <source>
        <strain>SBW25</strain>
    </source>
</reference>
<name>HEM3_PSEFS</name>
<sequence>MSSREIRIATRKSALALWQAEYVKARLEQAHPGLKVSLVPMVSRGDKLLDSPLSKIGGKGLFVKELETALLENEADIAVHSMKDVPMDFPEGLGLFCICEREDPRDAFVSNTYASLDALPLGSIVGTSSLRRQAQLLTRRPDLQIRFLRGNVNTRLAKLDAGEYDAIILAAAGLIRLGFEDRITSAISVEDSLPAGGQGAVGIECRTADSDIHALLKPLDHHDTEVRVTAERALNKHLNGGCQVPIACYAVLEGENLWLRGLVGDPEGGNLLTAEVRGPQCDATALGIQVAQALLDKGAGAILQKVYGEAGPQ</sequence>
<organism>
    <name type="scientific">Pseudomonas fluorescens (strain SBW25)</name>
    <dbReference type="NCBI Taxonomy" id="216595"/>
    <lineage>
        <taxon>Bacteria</taxon>
        <taxon>Pseudomonadati</taxon>
        <taxon>Pseudomonadota</taxon>
        <taxon>Gammaproteobacteria</taxon>
        <taxon>Pseudomonadales</taxon>
        <taxon>Pseudomonadaceae</taxon>
        <taxon>Pseudomonas</taxon>
    </lineage>
</organism>
<comment type="function">
    <text evidence="1">Tetrapolymerization of the monopyrrole PBG into the hydroxymethylbilane pre-uroporphyrinogen in several discrete steps.</text>
</comment>
<comment type="catalytic activity">
    <reaction evidence="1">
        <text>4 porphobilinogen + H2O = hydroxymethylbilane + 4 NH4(+)</text>
        <dbReference type="Rhea" id="RHEA:13185"/>
        <dbReference type="ChEBI" id="CHEBI:15377"/>
        <dbReference type="ChEBI" id="CHEBI:28938"/>
        <dbReference type="ChEBI" id="CHEBI:57845"/>
        <dbReference type="ChEBI" id="CHEBI:58126"/>
        <dbReference type="EC" id="2.5.1.61"/>
    </reaction>
</comment>
<comment type="cofactor">
    <cofactor evidence="1">
        <name>dipyrromethane</name>
        <dbReference type="ChEBI" id="CHEBI:60342"/>
    </cofactor>
    <text evidence="1">Binds 1 dipyrromethane group covalently.</text>
</comment>
<comment type="pathway">
    <text evidence="1">Porphyrin-containing compound metabolism; protoporphyrin-IX biosynthesis; coproporphyrinogen-III from 5-aminolevulinate: step 2/4.</text>
</comment>
<comment type="subunit">
    <text evidence="1">Monomer.</text>
</comment>
<comment type="miscellaneous">
    <text evidence="1">The porphobilinogen subunits are added to the dipyrromethane group.</text>
</comment>
<comment type="similarity">
    <text evidence="1">Belongs to the HMBS family.</text>
</comment>
<dbReference type="EC" id="2.5.1.61" evidence="1"/>
<dbReference type="EMBL" id="AM181176">
    <property type="protein sequence ID" value="CAY53424.1"/>
    <property type="molecule type" value="Genomic_DNA"/>
</dbReference>
<dbReference type="RefSeq" id="WP_015886492.1">
    <property type="nucleotide sequence ID" value="NC_012660.1"/>
</dbReference>
<dbReference type="SMR" id="C3K424"/>
<dbReference type="STRING" id="294.SRM1_05626"/>
<dbReference type="GeneID" id="93467562"/>
<dbReference type="PATRIC" id="fig|216595.4.peg.6054"/>
<dbReference type="eggNOG" id="COG0181">
    <property type="taxonomic scope" value="Bacteria"/>
</dbReference>
<dbReference type="HOGENOM" id="CLU_019704_0_2_6"/>
<dbReference type="OrthoDB" id="9810298at2"/>
<dbReference type="UniPathway" id="UPA00251">
    <property type="reaction ID" value="UER00319"/>
</dbReference>
<dbReference type="GO" id="GO:0005737">
    <property type="term" value="C:cytoplasm"/>
    <property type="evidence" value="ECO:0007669"/>
    <property type="project" value="TreeGrafter"/>
</dbReference>
<dbReference type="GO" id="GO:0004418">
    <property type="term" value="F:hydroxymethylbilane synthase activity"/>
    <property type="evidence" value="ECO:0007669"/>
    <property type="project" value="UniProtKB-UniRule"/>
</dbReference>
<dbReference type="GO" id="GO:0006782">
    <property type="term" value="P:protoporphyrinogen IX biosynthetic process"/>
    <property type="evidence" value="ECO:0007669"/>
    <property type="project" value="UniProtKB-UniRule"/>
</dbReference>
<dbReference type="CDD" id="cd13646">
    <property type="entry name" value="PBP2_EcHMBS_like"/>
    <property type="match status" value="1"/>
</dbReference>
<dbReference type="FunFam" id="3.30.160.40:FF:000002">
    <property type="entry name" value="Porphobilinogen deaminase"/>
    <property type="match status" value="1"/>
</dbReference>
<dbReference type="FunFam" id="3.40.190.10:FF:000004">
    <property type="entry name" value="Porphobilinogen deaminase"/>
    <property type="match status" value="1"/>
</dbReference>
<dbReference type="FunFam" id="3.40.190.10:FF:000005">
    <property type="entry name" value="Porphobilinogen deaminase"/>
    <property type="match status" value="1"/>
</dbReference>
<dbReference type="Gene3D" id="3.40.190.10">
    <property type="entry name" value="Periplasmic binding protein-like II"/>
    <property type="match status" value="2"/>
</dbReference>
<dbReference type="Gene3D" id="3.30.160.40">
    <property type="entry name" value="Porphobilinogen deaminase, C-terminal domain"/>
    <property type="match status" value="1"/>
</dbReference>
<dbReference type="HAMAP" id="MF_00260">
    <property type="entry name" value="Porphobil_deam"/>
    <property type="match status" value="1"/>
</dbReference>
<dbReference type="InterPro" id="IPR000860">
    <property type="entry name" value="HemC"/>
</dbReference>
<dbReference type="InterPro" id="IPR022419">
    <property type="entry name" value="Porphobilin_deaminase_cofac_BS"/>
</dbReference>
<dbReference type="InterPro" id="IPR022417">
    <property type="entry name" value="Porphobilin_deaminase_N"/>
</dbReference>
<dbReference type="InterPro" id="IPR022418">
    <property type="entry name" value="Porphobilinogen_deaminase_C"/>
</dbReference>
<dbReference type="InterPro" id="IPR036803">
    <property type="entry name" value="Porphobilinogen_deaminase_C_sf"/>
</dbReference>
<dbReference type="NCBIfam" id="TIGR00212">
    <property type="entry name" value="hemC"/>
    <property type="match status" value="1"/>
</dbReference>
<dbReference type="PANTHER" id="PTHR11557">
    <property type="entry name" value="PORPHOBILINOGEN DEAMINASE"/>
    <property type="match status" value="1"/>
</dbReference>
<dbReference type="PANTHER" id="PTHR11557:SF0">
    <property type="entry name" value="PORPHOBILINOGEN DEAMINASE"/>
    <property type="match status" value="1"/>
</dbReference>
<dbReference type="Pfam" id="PF01379">
    <property type="entry name" value="Porphobil_deam"/>
    <property type="match status" value="1"/>
</dbReference>
<dbReference type="Pfam" id="PF03900">
    <property type="entry name" value="Porphobil_deamC"/>
    <property type="match status" value="1"/>
</dbReference>
<dbReference type="PIRSF" id="PIRSF001438">
    <property type="entry name" value="4pyrrol_synth_OHMeBilane_synth"/>
    <property type="match status" value="1"/>
</dbReference>
<dbReference type="PRINTS" id="PR00151">
    <property type="entry name" value="PORPHBDMNASE"/>
</dbReference>
<dbReference type="SUPFAM" id="SSF53850">
    <property type="entry name" value="Periplasmic binding protein-like II"/>
    <property type="match status" value="1"/>
</dbReference>
<dbReference type="SUPFAM" id="SSF54782">
    <property type="entry name" value="Porphobilinogen deaminase (hydroxymethylbilane synthase), C-terminal domain"/>
    <property type="match status" value="1"/>
</dbReference>
<dbReference type="PROSITE" id="PS00533">
    <property type="entry name" value="PORPHOBILINOGEN_DEAM"/>
    <property type="match status" value="1"/>
</dbReference>
<proteinExistence type="inferred from homology"/>